<protein>
    <recommendedName>
        <fullName evidence="1">Phosphate acyltransferase</fullName>
        <ecNumber evidence="1">2.3.1.274</ecNumber>
    </recommendedName>
    <alternativeName>
        <fullName evidence="1">Acyl-ACP phosphotransacylase</fullName>
    </alternativeName>
    <alternativeName>
        <fullName evidence="1">Acyl-[acyl-carrier-protein]--phosphate acyltransferase</fullName>
    </alternativeName>
    <alternativeName>
        <fullName evidence="1">Phosphate-acyl-ACP acyltransferase</fullName>
    </alternativeName>
</protein>
<gene>
    <name evidence="1" type="primary">plsX</name>
    <name type="ordered locus">FTH_1117</name>
</gene>
<evidence type="ECO:0000255" key="1">
    <source>
        <dbReference type="HAMAP-Rule" id="MF_00019"/>
    </source>
</evidence>
<name>PLSX_FRATO</name>
<reference key="1">
    <citation type="journal article" date="2006" name="J. Bacteriol.">
        <title>Chromosome rearrangement and diversification of Francisella tularensis revealed by the type B (OSU18) genome sequence.</title>
        <authorList>
            <person name="Petrosino J.F."/>
            <person name="Xiang Q."/>
            <person name="Karpathy S.E."/>
            <person name="Jiang H."/>
            <person name="Yerrapragada S."/>
            <person name="Liu Y."/>
            <person name="Gioia J."/>
            <person name="Hemphill L."/>
            <person name="Gonzalez A."/>
            <person name="Raghavan T.M."/>
            <person name="Uzman A."/>
            <person name="Fox G.E."/>
            <person name="Highlander S."/>
            <person name="Reichard M."/>
            <person name="Morton R.J."/>
            <person name="Clinkenbeard K.D."/>
            <person name="Weinstock G.M."/>
        </authorList>
    </citation>
    <scope>NUCLEOTIDE SEQUENCE [LARGE SCALE GENOMIC DNA]</scope>
    <source>
        <strain>OSU18</strain>
    </source>
</reference>
<keyword id="KW-0963">Cytoplasm</keyword>
<keyword id="KW-0444">Lipid biosynthesis</keyword>
<keyword id="KW-0443">Lipid metabolism</keyword>
<keyword id="KW-0594">Phospholipid biosynthesis</keyword>
<keyword id="KW-1208">Phospholipid metabolism</keyword>
<keyword id="KW-0808">Transferase</keyword>
<dbReference type="EC" id="2.3.1.274" evidence="1"/>
<dbReference type="EMBL" id="CP000437">
    <property type="protein sequence ID" value="ABI82987.1"/>
    <property type="molecule type" value="Genomic_DNA"/>
</dbReference>
<dbReference type="RefSeq" id="WP_003016130.1">
    <property type="nucleotide sequence ID" value="NC_017463.1"/>
</dbReference>
<dbReference type="SMR" id="Q0BLP7"/>
<dbReference type="KEGG" id="fth:FTH_1117"/>
<dbReference type="UniPathway" id="UPA00085"/>
<dbReference type="GO" id="GO:0005737">
    <property type="term" value="C:cytoplasm"/>
    <property type="evidence" value="ECO:0007669"/>
    <property type="project" value="UniProtKB-SubCell"/>
</dbReference>
<dbReference type="GO" id="GO:0043811">
    <property type="term" value="F:phosphate:acyl-[acyl carrier protein] acyltransferase activity"/>
    <property type="evidence" value="ECO:0007669"/>
    <property type="project" value="UniProtKB-UniRule"/>
</dbReference>
<dbReference type="GO" id="GO:0006633">
    <property type="term" value="P:fatty acid biosynthetic process"/>
    <property type="evidence" value="ECO:0007669"/>
    <property type="project" value="UniProtKB-UniRule"/>
</dbReference>
<dbReference type="GO" id="GO:0008654">
    <property type="term" value="P:phospholipid biosynthetic process"/>
    <property type="evidence" value="ECO:0007669"/>
    <property type="project" value="UniProtKB-KW"/>
</dbReference>
<dbReference type="Gene3D" id="3.40.718.10">
    <property type="entry name" value="Isopropylmalate Dehydrogenase"/>
    <property type="match status" value="1"/>
</dbReference>
<dbReference type="HAMAP" id="MF_00019">
    <property type="entry name" value="PlsX"/>
    <property type="match status" value="1"/>
</dbReference>
<dbReference type="InterPro" id="IPR003664">
    <property type="entry name" value="FA_synthesis"/>
</dbReference>
<dbReference type="InterPro" id="IPR012281">
    <property type="entry name" value="Phospholipid_synth_PlsX-like"/>
</dbReference>
<dbReference type="NCBIfam" id="TIGR00182">
    <property type="entry name" value="plsX"/>
    <property type="match status" value="1"/>
</dbReference>
<dbReference type="PANTHER" id="PTHR30100">
    <property type="entry name" value="FATTY ACID/PHOSPHOLIPID SYNTHESIS PROTEIN PLSX"/>
    <property type="match status" value="1"/>
</dbReference>
<dbReference type="PANTHER" id="PTHR30100:SF1">
    <property type="entry name" value="PHOSPHATE ACYLTRANSFERASE"/>
    <property type="match status" value="1"/>
</dbReference>
<dbReference type="Pfam" id="PF02504">
    <property type="entry name" value="FA_synthesis"/>
    <property type="match status" value="1"/>
</dbReference>
<dbReference type="PIRSF" id="PIRSF002465">
    <property type="entry name" value="Phsphlp_syn_PlsX"/>
    <property type="match status" value="1"/>
</dbReference>
<dbReference type="SUPFAM" id="SSF53659">
    <property type="entry name" value="Isocitrate/Isopropylmalate dehydrogenase-like"/>
    <property type="match status" value="1"/>
</dbReference>
<sequence length="348" mass="37840">MGYKISIDAMGGDHGLNTTIPAALEAVKKDSNLQIVLVGDHHKIKRALDRYSKVKKIKLPVLQRIAIHHASETVGMDESPSIAVRKKKDSSMRVAINLVKDRTVDACVSAGNTGALMATSKFVLKTINGVDRPAIVYALPAFNRETKQLSKTYMLDLGANVVCTSEQLFQFAIMGSILAASSKGIAEPRVSLLNIGEEEMKGLDNIKNAAKLLQGCDFINYNGYIEGKYIFDDTTDVIVCDGFVGNVSLKTMEGSLRLIESLIKKTIQESSLLMKIPIVMALPIFKKMKKGMNLDSFNGASLLGLTGIVVKSHGGASANAFETAIYEAIKEIKYNIPKTIQESLEKVL</sequence>
<comment type="function">
    <text evidence="1">Catalyzes the reversible formation of acyl-phosphate (acyl-PO(4)) from acyl-[acyl-carrier-protein] (acyl-ACP). This enzyme utilizes acyl-ACP as fatty acyl donor, but not acyl-CoA.</text>
</comment>
<comment type="catalytic activity">
    <reaction evidence="1">
        <text>a fatty acyl-[ACP] + phosphate = an acyl phosphate + holo-[ACP]</text>
        <dbReference type="Rhea" id="RHEA:42292"/>
        <dbReference type="Rhea" id="RHEA-COMP:9685"/>
        <dbReference type="Rhea" id="RHEA-COMP:14125"/>
        <dbReference type="ChEBI" id="CHEBI:43474"/>
        <dbReference type="ChEBI" id="CHEBI:59918"/>
        <dbReference type="ChEBI" id="CHEBI:64479"/>
        <dbReference type="ChEBI" id="CHEBI:138651"/>
        <dbReference type="EC" id="2.3.1.274"/>
    </reaction>
</comment>
<comment type="pathway">
    <text evidence="1">Lipid metabolism; phospholipid metabolism.</text>
</comment>
<comment type="subunit">
    <text evidence="1">Homodimer. Probably interacts with PlsY.</text>
</comment>
<comment type="subcellular location">
    <subcellularLocation>
        <location evidence="1">Cytoplasm</location>
    </subcellularLocation>
    <text evidence="1">Associated with the membrane possibly through PlsY.</text>
</comment>
<comment type="similarity">
    <text evidence="1">Belongs to the PlsX family.</text>
</comment>
<proteinExistence type="inferred from homology"/>
<organism>
    <name type="scientific">Francisella tularensis subsp. holarctica (strain OSU18)</name>
    <dbReference type="NCBI Taxonomy" id="393011"/>
    <lineage>
        <taxon>Bacteria</taxon>
        <taxon>Pseudomonadati</taxon>
        <taxon>Pseudomonadota</taxon>
        <taxon>Gammaproteobacteria</taxon>
        <taxon>Thiotrichales</taxon>
        <taxon>Francisellaceae</taxon>
        <taxon>Francisella</taxon>
    </lineage>
</organism>
<feature type="chain" id="PRO_1000001764" description="Phosphate acyltransferase">
    <location>
        <begin position="1"/>
        <end position="348"/>
    </location>
</feature>
<accession>Q0BLP7</accession>